<feature type="chain" id="PRO_0000393876" description="Protein cereblon">
    <location>
        <begin position="1"/>
        <end position="445"/>
    </location>
</feature>
<feature type="domain" description="Lon N-terminal" evidence="3">
    <location>
        <begin position="82"/>
        <end position="321"/>
    </location>
</feature>
<feature type="domain" description="CULT" evidence="4">
    <location>
        <begin position="320"/>
        <end position="428"/>
    </location>
</feature>
<feature type="region of interest" description="Disordered" evidence="5">
    <location>
        <begin position="1"/>
        <end position="50"/>
    </location>
</feature>
<feature type="compositionally biased region" description="Acidic residues" evidence="5">
    <location>
        <begin position="23"/>
        <end position="36"/>
    </location>
</feature>
<feature type="binding site" evidence="7">
    <location>
        <position position="325"/>
    </location>
    <ligand>
        <name>Zn(2+)</name>
        <dbReference type="ChEBI" id="CHEBI:29105"/>
    </ligand>
</feature>
<feature type="binding site" evidence="7">
    <location>
        <position position="328"/>
    </location>
    <ligand>
        <name>Zn(2+)</name>
        <dbReference type="ChEBI" id="CHEBI:29105"/>
    </ligand>
</feature>
<feature type="binding site" evidence="7">
    <location>
        <position position="380"/>
    </location>
    <ligand>
        <name>(S)-thalidomide</name>
        <dbReference type="ChEBI" id="CHEBI:61918"/>
    </ligand>
</feature>
<feature type="binding site" evidence="7">
    <location>
        <position position="382"/>
    </location>
    <ligand>
        <name>(S)-thalidomide</name>
        <dbReference type="ChEBI" id="CHEBI:61918"/>
    </ligand>
</feature>
<feature type="binding site" evidence="7">
    <location>
        <position position="388"/>
    </location>
    <ligand>
        <name>(S)-thalidomide</name>
        <dbReference type="ChEBI" id="CHEBI:61918"/>
    </ligand>
</feature>
<feature type="binding site" evidence="7">
    <location>
        <position position="393"/>
    </location>
    <ligand>
        <name>Zn(2+)</name>
        <dbReference type="ChEBI" id="CHEBI:29105"/>
    </ligand>
</feature>
<feature type="binding site" evidence="7">
    <location>
        <position position="396"/>
    </location>
    <ligand>
        <name>Zn(2+)</name>
        <dbReference type="ChEBI" id="CHEBI:29105"/>
    </ligand>
</feature>
<feature type="helix" evidence="11">
    <location>
        <begin position="53"/>
        <end position="56"/>
    </location>
</feature>
<feature type="helix" evidence="11">
    <location>
        <begin position="59"/>
        <end position="61"/>
    </location>
</feature>
<feature type="strand" evidence="11">
    <location>
        <begin position="79"/>
        <end position="84"/>
    </location>
</feature>
<feature type="strand" evidence="11">
    <location>
        <begin position="97"/>
        <end position="102"/>
    </location>
</feature>
<feature type="helix" evidence="11">
    <location>
        <begin position="105"/>
        <end position="115"/>
    </location>
</feature>
<feature type="turn" evidence="11">
    <location>
        <begin position="116"/>
        <end position="118"/>
    </location>
</feature>
<feature type="strand" evidence="11">
    <location>
        <begin position="120"/>
        <end position="128"/>
    </location>
</feature>
<feature type="turn" evidence="11">
    <location>
        <begin position="129"/>
        <end position="132"/>
    </location>
</feature>
<feature type="strand" evidence="11">
    <location>
        <begin position="133"/>
        <end position="150"/>
    </location>
</feature>
<feature type="strand" evidence="11">
    <location>
        <begin position="153"/>
        <end position="173"/>
    </location>
</feature>
<feature type="strand" evidence="11">
    <location>
        <begin position="179"/>
        <end position="185"/>
    </location>
</feature>
<feature type="turn" evidence="11">
    <location>
        <begin position="194"/>
        <end position="198"/>
    </location>
</feature>
<feature type="helix" evidence="10">
    <location>
        <begin position="202"/>
        <end position="204"/>
    </location>
</feature>
<feature type="helix" evidence="11">
    <location>
        <begin position="223"/>
        <end position="233"/>
    </location>
</feature>
<feature type="helix" evidence="11">
    <location>
        <begin position="235"/>
        <end position="239"/>
    </location>
</feature>
<feature type="strand" evidence="10">
    <location>
        <begin position="240"/>
        <end position="242"/>
    </location>
</feature>
<feature type="helix" evidence="11">
    <location>
        <begin position="244"/>
        <end position="247"/>
    </location>
</feature>
<feature type="helix" evidence="11">
    <location>
        <begin position="248"/>
        <end position="250"/>
    </location>
</feature>
<feature type="helix" evidence="11">
    <location>
        <begin position="252"/>
        <end position="266"/>
    </location>
</feature>
<feature type="turn" evidence="11">
    <location>
        <begin position="272"/>
        <end position="274"/>
    </location>
</feature>
<feature type="helix" evidence="11">
    <location>
        <begin position="279"/>
        <end position="288"/>
    </location>
</feature>
<feature type="helix" evidence="11">
    <location>
        <begin position="294"/>
        <end position="302"/>
    </location>
</feature>
<feature type="helix" evidence="11">
    <location>
        <begin position="306"/>
        <end position="319"/>
    </location>
</feature>
<feature type="strand" evidence="11">
    <location>
        <begin position="322"/>
        <end position="325"/>
    </location>
</feature>
<feature type="turn" evidence="11">
    <location>
        <begin position="326"/>
        <end position="328"/>
    </location>
</feature>
<feature type="strand" evidence="11">
    <location>
        <begin position="332"/>
        <end position="335"/>
    </location>
</feature>
<feature type="helix" evidence="11">
    <location>
        <begin position="336"/>
        <end position="338"/>
    </location>
</feature>
<feature type="strand" evidence="11">
    <location>
        <begin position="346"/>
        <end position="352"/>
    </location>
</feature>
<feature type="strand" evidence="11">
    <location>
        <begin position="358"/>
        <end position="365"/>
    </location>
</feature>
<feature type="strand" evidence="11">
    <location>
        <begin position="369"/>
        <end position="377"/>
    </location>
</feature>
<feature type="strand" evidence="11">
    <location>
        <begin position="386"/>
        <end position="393"/>
    </location>
</feature>
<feature type="turn" evidence="11">
    <location>
        <begin position="394"/>
        <end position="396"/>
    </location>
</feature>
<feature type="strand" evidence="11">
    <location>
        <begin position="399"/>
        <end position="408"/>
    </location>
</feature>
<feature type="strand" evidence="11">
    <location>
        <begin position="412"/>
        <end position="420"/>
    </location>
</feature>
<feature type="helix" evidence="11">
    <location>
        <begin position="421"/>
        <end position="423"/>
    </location>
</feature>
<dbReference type="EMBL" id="DR425223">
    <property type="status" value="NOT_ANNOTATED_CDS"/>
    <property type="molecule type" value="mRNA"/>
</dbReference>
<dbReference type="PDB" id="4CI1">
    <property type="method" value="X-ray"/>
    <property type="resolution" value="2.98 A"/>
    <property type="chains" value="B=1-445"/>
</dbReference>
<dbReference type="PDB" id="4CI2">
    <property type="method" value="X-ray"/>
    <property type="resolution" value="2.95 A"/>
    <property type="chains" value="B=1-445"/>
</dbReference>
<dbReference type="PDB" id="4CI3">
    <property type="method" value="X-ray"/>
    <property type="resolution" value="3.50 A"/>
    <property type="chains" value="B=1-445"/>
</dbReference>
<dbReference type="PDBsum" id="4CI1"/>
<dbReference type="PDBsum" id="4CI2"/>
<dbReference type="PDBsum" id="4CI3"/>
<dbReference type="SMR" id="P0CF65"/>
<dbReference type="DIP" id="DIP-61026N"/>
<dbReference type="FunCoup" id="P0CF65">
    <property type="interactions" value="2819"/>
</dbReference>
<dbReference type="IntAct" id="P0CF65">
    <property type="interactions" value="1"/>
</dbReference>
<dbReference type="STRING" id="9031.ENSGALP00000013451"/>
<dbReference type="iPTMnet" id="P0CF65"/>
<dbReference type="PaxDb" id="9031-ENSGALP00000013451"/>
<dbReference type="VEuPathDB" id="HostDB:geneid_416106"/>
<dbReference type="eggNOG" id="KOG1400">
    <property type="taxonomic scope" value="Eukaryota"/>
</dbReference>
<dbReference type="InParanoid" id="P0CF65"/>
<dbReference type="OrthoDB" id="267517at2759"/>
<dbReference type="PhylomeDB" id="P0CF65"/>
<dbReference type="UniPathway" id="UPA00143"/>
<dbReference type="EvolutionaryTrace" id="P0CF65"/>
<dbReference type="Proteomes" id="UP000000539">
    <property type="component" value="Unassembled WGS sequence"/>
</dbReference>
<dbReference type="GO" id="GO:0031464">
    <property type="term" value="C:Cul4A-RING E3 ubiquitin ligase complex"/>
    <property type="evidence" value="ECO:0000250"/>
    <property type="project" value="UniProtKB"/>
</dbReference>
<dbReference type="GO" id="GO:0005737">
    <property type="term" value="C:cytoplasm"/>
    <property type="evidence" value="ECO:0000250"/>
    <property type="project" value="UniProtKB"/>
</dbReference>
<dbReference type="GO" id="GO:0005634">
    <property type="term" value="C:nucleus"/>
    <property type="evidence" value="ECO:0000250"/>
    <property type="project" value="UniProtKB"/>
</dbReference>
<dbReference type="GO" id="GO:0046872">
    <property type="term" value="F:metal ion binding"/>
    <property type="evidence" value="ECO:0007669"/>
    <property type="project" value="UniProtKB-KW"/>
</dbReference>
<dbReference type="GO" id="GO:0043161">
    <property type="term" value="P:proteasome-mediated ubiquitin-dependent protein catabolic process"/>
    <property type="evidence" value="ECO:0000250"/>
    <property type="project" value="UniProtKB"/>
</dbReference>
<dbReference type="GO" id="GO:0016567">
    <property type="term" value="P:protein ubiquitination"/>
    <property type="evidence" value="ECO:0000250"/>
    <property type="project" value="UniProtKB"/>
</dbReference>
<dbReference type="CDD" id="cd15777">
    <property type="entry name" value="CRBN_C_like"/>
    <property type="match status" value="1"/>
</dbReference>
<dbReference type="FunFam" id="1.20.58.1480:FF:000004">
    <property type="entry name" value="Cereblon, isoform CRA_c"/>
    <property type="match status" value="1"/>
</dbReference>
<dbReference type="FunFam" id="2.170.150.20:FF:000002">
    <property type="entry name" value="Cereblon, isoform CRA_c"/>
    <property type="match status" value="1"/>
</dbReference>
<dbReference type="FunFam" id="2.30.130.40:FF:000002">
    <property type="entry name" value="Cereblon, isoform CRA_c"/>
    <property type="match status" value="1"/>
</dbReference>
<dbReference type="Gene3D" id="1.20.58.1480">
    <property type="match status" value="1"/>
</dbReference>
<dbReference type="Gene3D" id="2.30.130.40">
    <property type="entry name" value="LON domain-like"/>
    <property type="match status" value="1"/>
</dbReference>
<dbReference type="Gene3D" id="2.170.150.20">
    <property type="entry name" value="Peptide methionine sulfoxide reductase"/>
    <property type="match status" value="1"/>
</dbReference>
<dbReference type="InterPro" id="IPR034750">
    <property type="entry name" value="CULT"/>
</dbReference>
<dbReference type="InterPro" id="IPR003111">
    <property type="entry name" value="Lon_prtase_N"/>
</dbReference>
<dbReference type="InterPro" id="IPR046336">
    <property type="entry name" value="Lon_prtase_N_sf"/>
</dbReference>
<dbReference type="InterPro" id="IPR015947">
    <property type="entry name" value="PUA-like_sf"/>
</dbReference>
<dbReference type="InterPro" id="IPR004910">
    <property type="entry name" value="Yippee/Mis18/Cereblon"/>
</dbReference>
<dbReference type="PANTHER" id="PTHR14255">
    <property type="entry name" value="CEREBLON"/>
    <property type="match status" value="1"/>
</dbReference>
<dbReference type="PANTHER" id="PTHR14255:SF4">
    <property type="entry name" value="PROTEIN CEREBLON"/>
    <property type="match status" value="1"/>
</dbReference>
<dbReference type="Pfam" id="PF02190">
    <property type="entry name" value="LON_substr_bdg"/>
    <property type="match status" value="1"/>
</dbReference>
<dbReference type="Pfam" id="PF03226">
    <property type="entry name" value="Yippee-Mis18"/>
    <property type="match status" value="1"/>
</dbReference>
<dbReference type="SMART" id="SM00464">
    <property type="entry name" value="LON"/>
    <property type="match status" value="1"/>
</dbReference>
<dbReference type="SUPFAM" id="SSF88697">
    <property type="entry name" value="PUA domain-like"/>
    <property type="match status" value="1"/>
</dbReference>
<dbReference type="PROSITE" id="PS51788">
    <property type="entry name" value="CULT"/>
    <property type="match status" value="1"/>
</dbReference>
<dbReference type="PROSITE" id="PS51787">
    <property type="entry name" value="LON_N"/>
    <property type="match status" value="1"/>
</dbReference>
<reference key="1">
    <citation type="journal article" date="2004" name="Nature">
        <title>Sequence and comparative analysis of the chicken genome provide unique perspectives on vertebrate evolution.</title>
        <authorList>
            <person name="Hillier L.W."/>
            <person name="Miller W."/>
            <person name="Birney E."/>
            <person name="Warren W."/>
            <person name="Hardison R.C."/>
            <person name="Ponting C.P."/>
            <person name="Bork P."/>
            <person name="Burt D.W."/>
            <person name="Groenen M.A.M."/>
            <person name="Delany M.E."/>
            <person name="Dodgson J.B."/>
            <person name="Chinwalla A.T."/>
            <person name="Cliften P.F."/>
            <person name="Clifton S.W."/>
            <person name="Delehaunty K.D."/>
            <person name="Fronick C."/>
            <person name="Fulton R.S."/>
            <person name="Graves T.A."/>
            <person name="Kremitzki C."/>
            <person name="Layman D."/>
            <person name="Magrini V."/>
            <person name="McPherson J.D."/>
            <person name="Miner T.L."/>
            <person name="Minx P."/>
            <person name="Nash W.E."/>
            <person name="Nhan M.N."/>
            <person name="Nelson J.O."/>
            <person name="Oddy L.G."/>
            <person name="Pohl C.S."/>
            <person name="Randall-Maher J."/>
            <person name="Smith S.M."/>
            <person name="Wallis J.W."/>
            <person name="Yang S.-P."/>
            <person name="Romanov M.N."/>
            <person name="Rondelli C.M."/>
            <person name="Paton B."/>
            <person name="Smith J."/>
            <person name="Morrice D."/>
            <person name="Daniels L."/>
            <person name="Tempest H.G."/>
            <person name="Robertson L."/>
            <person name="Masabanda J.S."/>
            <person name="Griffin D.K."/>
            <person name="Vignal A."/>
            <person name="Fillon V."/>
            <person name="Jacobbson L."/>
            <person name="Kerje S."/>
            <person name="Andersson L."/>
            <person name="Crooijmans R.P."/>
            <person name="Aerts J."/>
            <person name="van der Poel J.J."/>
            <person name="Ellegren H."/>
            <person name="Caldwell R.B."/>
            <person name="Hubbard S.J."/>
            <person name="Grafham D.V."/>
            <person name="Kierzek A.M."/>
            <person name="McLaren S.R."/>
            <person name="Overton I.M."/>
            <person name="Arakawa H."/>
            <person name="Beattie K.J."/>
            <person name="Bezzubov Y."/>
            <person name="Boardman P.E."/>
            <person name="Bonfield J.K."/>
            <person name="Croning M.D.R."/>
            <person name="Davies R.M."/>
            <person name="Francis M.D."/>
            <person name="Humphray S.J."/>
            <person name="Scott C.E."/>
            <person name="Taylor R.G."/>
            <person name="Tickle C."/>
            <person name="Brown W.R.A."/>
            <person name="Rogers J."/>
            <person name="Buerstedde J.-M."/>
            <person name="Wilson S.A."/>
            <person name="Stubbs L."/>
            <person name="Ovcharenko I."/>
            <person name="Gordon L."/>
            <person name="Lucas S."/>
            <person name="Miller M.M."/>
            <person name="Inoko H."/>
            <person name="Shiina T."/>
            <person name="Kaufman J."/>
            <person name="Salomonsen J."/>
            <person name="Skjoedt K."/>
            <person name="Wong G.K.-S."/>
            <person name="Wang J."/>
            <person name="Liu B."/>
            <person name="Wang J."/>
            <person name="Yu J."/>
            <person name="Yang H."/>
            <person name="Nefedov M."/>
            <person name="Koriabine M."/>
            <person name="Dejong P.J."/>
            <person name="Goodstadt L."/>
            <person name="Webber C."/>
            <person name="Dickens N.J."/>
            <person name="Letunic I."/>
            <person name="Suyama M."/>
            <person name="Torrents D."/>
            <person name="von Mering C."/>
            <person name="Zdobnov E.M."/>
            <person name="Makova K."/>
            <person name="Nekrutenko A."/>
            <person name="Elnitski L."/>
            <person name="Eswara P."/>
            <person name="King D.C."/>
            <person name="Yang S.-P."/>
            <person name="Tyekucheva S."/>
            <person name="Radakrishnan A."/>
            <person name="Harris R.S."/>
            <person name="Chiaromonte F."/>
            <person name="Taylor J."/>
            <person name="He J."/>
            <person name="Rijnkels M."/>
            <person name="Griffiths-Jones S."/>
            <person name="Ureta-Vidal A."/>
            <person name="Hoffman M.M."/>
            <person name="Severin J."/>
            <person name="Searle S.M.J."/>
            <person name="Law A.S."/>
            <person name="Speed D."/>
            <person name="Waddington D."/>
            <person name="Cheng Z."/>
            <person name="Tuzun E."/>
            <person name="Eichler E."/>
            <person name="Bao Z."/>
            <person name="Flicek P."/>
            <person name="Shteynberg D.D."/>
            <person name="Brent M.R."/>
            <person name="Bye J.M."/>
            <person name="Huckle E.J."/>
            <person name="Chatterji S."/>
            <person name="Dewey C."/>
            <person name="Pachter L."/>
            <person name="Kouranov A."/>
            <person name="Mourelatos Z."/>
            <person name="Hatzigeorgiou A.G."/>
            <person name="Paterson A.H."/>
            <person name="Ivarie R."/>
            <person name="Brandstrom M."/>
            <person name="Axelsson E."/>
            <person name="Backstrom N."/>
            <person name="Berlin S."/>
            <person name="Webster M.T."/>
            <person name="Pourquie O."/>
            <person name="Reymond A."/>
            <person name="Ucla C."/>
            <person name="Antonarakis S.E."/>
            <person name="Long M."/>
            <person name="Emerson J.J."/>
            <person name="Betran E."/>
            <person name="Dupanloup I."/>
            <person name="Kaessmann H."/>
            <person name="Hinrichs A.S."/>
            <person name="Bejerano G."/>
            <person name="Furey T.S."/>
            <person name="Harte R.A."/>
            <person name="Raney B."/>
            <person name="Siepel A."/>
            <person name="Kent W.J."/>
            <person name="Haussler D."/>
            <person name="Eyras E."/>
            <person name="Castelo R."/>
            <person name="Abril J.F."/>
            <person name="Castellano S."/>
            <person name="Camara F."/>
            <person name="Parra G."/>
            <person name="Guigo R."/>
            <person name="Bourque G."/>
            <person name="Tesler G."/>
            <person name="Pevzner P.A."/>
            <person name="Smit A."/>
            <person name="Fulton L.A."/>
            <person name="Mardis E.R."/>
            <person name="Wilson R.K."/>
        </authorList>
    </citation>
    <scope>NUCLEOTIDE SEQUENCE [LARGE SCALE GENOMIC DNA]</scope>
    <source>
        <strain>Red jungle fowl</strain>
    </source>
</reference>
<reference key="2">
    <citation type="submission" date="2005-07" db="EMBL/GenBank/DDBJ databases">
        <authorList>
            <person name="Wistow G."/>
            <person name="Peterson K."/>
            <person name="McMurtry J."/>
        </authorList>
    </citation>
    <scope>NUCLEOTIDE SEQUENCE [LARGE SCALE MRNA] OF 46-321</scope>
</reference>
<reference key="3">
    <citation type="journal article" date="2010" name="Science">
        <title>Identification of a primary target of thalidomide teratogenicity.</title>
        <authorList>
            <person name="Ito T."/>
            <person name="Ando H."/>
            <person name="Suzuki T."/>
            <person name="Ogura T."/>
            <person name="Hotta K."/>
            <person name="Imamura Y."/>
            <person name="Yamaguchi Y."/>
            <person name="Handa H."/>
        </authorList>
    </citation>
    <scope>FUNCTION</scope>
    <scope>MISCELLANEOUS</scope>
</reference>
<reference key="4">
    <citation type="journal article" date="2014" name="Nature">
        <title>Structure of the DDB1-CRBN E3 ubiquitin ligase in complex with thalidomide.</title>
        <authorList>
            <person name="Fischer E.S."/>
            <person name="Bohm K."/>
            <person name="Lydeard J.R."/>
            <person name="Yang H."/>
            <person name="Stadler M.B."/>
            <person name="Cavadini S."/>
            <person name="Nagel J."/>
            <person name="Serluca F."/>
            <person name="Acker V."/>
            <person name="Lingaraju G.M."/>
            <person name="Tichkule R.B."/>
            <person name="Schebesta M."/>
            <person name="Forrester W.C."/>
            <person name="Schirle M."/>
            <person name="Hassiepen U."/>
            <person name="Ottl J."/>
            <person name="Hild M."/>
            <person name="Beckwith R.E."/>
            <person name="Harper J.W."/>
            <person name="Jenkins J.L."/>
            <person name="Thoma N.H."/>
        </authorList>
    </citation>
    <scope>X-RAY CRYSTALLOGRAPHY (2.95 ANGSTROMS) IN COMPLEX WITH DDB1; S-LENALIDOMIDE; S-POMALIDOMIDE; S-THALIDOMIDE AND ZINC</scope>
</reference>
<accession>P0CF65</accession>
<proteinExistence type="evidence at protein level"/>
<evidence type="ECO:0000250" key="1">
    <source>
        <dbReference type="UniProtKB" id="Q8C7D2"/>
    </source>
</evidence>
<evidence type="ECO:0000250" key="2">
    <source>
        <dbReference type="UniProtKB" id="Q96SW2"/>
    </source>
</evidence>
<evidence type="ECO:0000255" key="3">
    <source>
        <dbReference type="PROSITE-ProRule" id="PRU01123"/>
    </source>
</evidence>
<evidence type="ECO:0000255" key="4">
    <source>
        <dbReference type="PROSITE-ProRule" id="PRU01124"/>
    </source>
</evidence>
<evidence type="ECO:0000256" key="5">
    <source>
        <dbReference type="SAM" id="MobiDB-lite"/>
    </source>
</evidence>
<evidence type="ECO:0000269" key="6">
    <source>
    </source>
</evidence>
<evidence type="ECO:0000269" key="7">
    <source>
    </source>
</evidence>
<evidence type="ECO:0000305" key="8"/>
<evidence type="ECO:0000305" key="9">
    <source>
    </source>
</evidence>
<evidence type="ECO:0007829" key="10">
    <source>
        <dbReference type="PDB" id="4CI1"/>
    </source>
</evidence>
<evidence type="ECO:0007829" key="11">
    <source>
        <dbReference type="PDB" id="4CI2"/>
    </source>
</evidence>
<name>CRBN_CHICK</name>
<protein>
    <recommendedName>
        <fullName>Protein cereblon</fullName>
    </recommendedName>
</protein>
<organism>
    <name type="scientific">Gallus gallus</name>
    <name type="common">Chicken</name>
    <dbReference type="NCBI Taxonomy" id="9031"/>
    <lineage>
        <taxon>Eukaryota</taxon>
        <taxon>Metazoa</taxon>
        <taxon>Chordata</taxon>
        <taxon>Craniata</taxon>
        <taxon>Vertebrata</taxon>
        <taxon>Euteleostomi</taxon>
        <taxon>Archelosauria</taxon>
        <taxon>Archosauria</taxon>
        <taxon>Dinosauria</taxon>
        <taxon>Saurischia</taxon>
        <taxon>Theropoda</taxon>
        <taxon>Coelurosauria</taxon>
        <taxon>Aves</taxon>
        <taxon>Neognathae</taxon>
        <taxon>Galloanserae</taxon>
        <taxon>Galliformes</taxon>
        <taxon>Phasianidae</taxon>
        <taxon>Phasianinae</taxon>
        <taxon>Gallus</taxon>
    </lineage>
</organism>
<keyword id="KW-0002">3D-structure</keyword>
<keyword id="KW-0963">Cytoplasm</keyword>
<keyword id="KW-0479">Metal-binding</keyword>
<keyword id="KW-0539">Nucleus</keyword>
<keyword id="KW-1185">Reference proteome</keyword>
<keyword id="KW-0833">Ubl conjugation pathway</keyword>
<keyword id="KW-0862">Zinc</keyword>
<gene>
    <name type="primary">CRBN</name>
</gene>
<sequence>MAAEEGGDGRRNMGNPPPPAPAESEEEDDNEMEVEDQDGKEAEKPNMINFDTSLPTSHMYLGSDMEEFHGRTLHDDDSCQVIPVLPHVMVMLIPGQTLPLQLFHPQEVSMVRNLIQKDRTFAVLAYSNVREREAHFGTTAEIYAYREEQEYGIETVKVKAIGRQRFKVLEIRTQSDGIQQAKVQILPERVLPSTMSAVQLQSLSRRHIFPSSKPKVWQDRAFRQWWQKYQKRKFHCASLTSWPPWLYSLYDAETLMERVKRQLHEWDENLKDESLPTNPIDFSYRVAACLPIDDALRIQLLKIGSAIQRLRCELDIMNKCTSLCCKQCQDTEITTKNEIFSLSLCGPMAAYVNPHGYIHETLTVYKACNLNLSGRPSTEHSWFPGYAWTIAQCRICGNHMGWKFTATKKDMSPQKFWGLTRSALLPRIPEAEDELGHDRSPLLCL</sequence>
<comment type="function">
    <text evidence="1 2 6 8">Substrate recognition component of a DCX (DDB1-CUL4-X-box) E3 protein ligase complex that mediates the ubiquitination and subsequent proteasomal degradation of target proteins, such as MEIS2 (Probable). Normal degradation of key regulatory proteins is required for normal limb outgrowth and expression of the fibroblast growth factor FGF8 (PubMed:20223979). Maintains presynaptic glutamate release and consequently cognitive functions, such as memory and learning, by negatively regulating large-conductance calcium-activated potassium (BK) channels in excitatory neurons. Likely to function by regulating the assembly and neuronal surface expression of BK channels via its interaction with KCNT1 (By similarity). May also be involved in regulating anxiety-like behaviors via a BK channel-independent mechanism (By similarity).</text>
</comment>
<comment type="pathway">
    <text evidence="2">Protein modification; protein ubiquitination.</text>
</comment>
<comment type="subunit">
    <text evidence="7 8">Component of a DCX (DDB1-CUL4-X-box) protein ligase complex. Interacts directly with DDB1 (PubMed:25043012).</text>
</comment>
<comment type="subcellular location">
    <subcellularLocation>
        <location evidence="2">Cytoplasm</location>
    </subcellularLocation>
    <subcellularLocation>
        <location evidence="2">Nucleus</location>
    </subcellularLocation>
</comment>
<comment type="miscellaneous">
    <text evidence="9">Thalidomide is teratogenic in human, chicken and zebrafish, but not in mice. Binding of thalidomide and related drugs changes the substrate specificity of the human DCX (DDB1-CUL4-X-box) E3 protein ligase complex, leading to decreased degradation of endogenous target proteins and increased degradation of other proteins that are not normal substrates. This is probably the underlying cause of the teratogenic activity of thalidomide, possibly due to abnormal regulation of the BMP and FGF8 signaling pathways (PubMed:20223979).</text>
</comment>
<comment type="similarity">
    <text evidence="8">Belongs to the CRBN family.</text>
</comment>